<dbReference type="EC" id="4.1.1.4" evidence="1"/>
<dbReference type="EMBL" id="CP000459">
    <property type="protein sequence ID" value="ABK12447.1"/>
    <property type="molecule type" value="Genomic_DNA"/>
</dbReference>
<dbReference type="RefSeq" id="WP_011548736.1">
    <property type="nucleotide sequence ID" value="NC_008543.1"/>
</dbReference>
<dbReference type="SMR" id="A0B471"/>
<dbReference type="KEGG" id="bch:Bcen2424_5714"/>
<dbReference type="HOGENOM" id="CLU_077089_0_0_4"/>
<dbReference type="GO" id="GO:0047602">
    <property type="term" value="F:acetoacetate decarboxylase activity"/>
    <property type="evidence" value="ECO:0007669"/>
    <property type="project" value="UniProtKB-UniRule"/>
</dbReference>
<dbReference type="Gene3D" id="2.40.400.10">
    <property type="entry name" value="Acetoacetate decarboxylase-like"/>
    <property type="match status" value="1"/>
</dbReference>
<dbReference type="HAMAP" id="MF_00597">
    <property type="entry name" value="ADC"/>
    <property type="match status" value="1"/>
</dbReference>
<dbReference type="InterPro" id="IPR010451">
    <property type="entry name" value="Acetoacetate_decarboxylase"/>
</dbReference>
<dbReference type="InterPro" id="IPR023653">
    <property type="entry name" value="Acetoacetate_decarboxylase_bac"/>
</dbReference>
<dbReference type="InterPro" id="IPR023375">
    <property type="entry name" value="ADC_dom_sf"/>
</dbReference>
<dbReference type="NCBIfam" id="NF002614">
    <property type="entry name" value="PRK02265.1"/>
    <property type="match status" value="1"/>
</dbReference>
<dbReference type="Pfam" id="PF06314">
    <property type="entry name" value="ADC"/>
    <property type="match status" value="1"/>
</dbReference>
<dbReference type="SUPFAM" id="SSF160104">
    <property type="entry name" value="Acetoacetate decarboxylase-like"/>
    <property type="match status" value="1"/>
</dbReference>
<keyword id="KW-0210">Decarboxylase</keyword>
<keyword id="KW-0456">Lyase</keyword>
<keyword id="KW-0704">Schiff base</keyword>
<proteinExistence type="inferred from homology"/>
<protein>
    <recommendedName>
        <fullName evidence="1">Acetoacetate decarboxylase</fullName>
        <shortName evidence="1">AAD</shortName>
        <shortName evidence="1">ADC</shortName>
        <ecNumber evidence="1">4.1.1.4</ecNumber>
    </recommendedName>
</protein>
<name>ADC_BURCH</name>
<comment type="function">
    <text evidence="1">Catalyzes the conversion of acetoacetate to acetone and carbon dioxide.</text>
</comment>
<comment type="catalytic activity">
    <reaction evidence="1">
        <text>acetoacetate + H(+) = acetone + CO2</text>
        <dbReference type="Rhea" id="RHEA:19729"/>
        <dbReference type="ChEBI" id="CHEBI:13705"/>
        <dbReference type="ChEBI" id="CHEBI:15347"/>
        <dbReference type="ChEBI" id="CHEBI:15378"/>
        <dbReference type="ChEBI" id="CHEBI:16526"/>
        <dbReference type="EC" id="4.1.1.4"/>
    </reaction>
</comment>
<comment type="similarity">
    <text evidence="1">Belongs to the ADC family.</text>
</comment>
<feature type="chain" id="PRO_1000025632" description="Acetoacetate decarboxylase">
    <location>
        <begin position="1"/>
        <end position="246"/>
    </location>
</feature>
<feature type="active site" description="Schiff-base intermediate with acetoacetate" evidence="1">
    <location>
        <position position="116"/>
    </location>
</feature>
<accession>A0B471</accession>
<reference key="1">
    <citation type="submission" date="2006-08" db="EMBL/GenBank/DDBJ databases">
        <title>Complete sequence of chromosome 2 of Burkholderia cenocepacia HI2424.</title>
        <authorList>
            <person name="Copeland A."/>
            <person name="Lucas S."/>
            <person name="Lapidus A."/>
            <person name="Barry K."/>
            <person name="Detter J.C."/>
            <person name="Glavina del Rio T."/>
            <person name="Hammon N."/>
            <person name="Israni S."/>
            <person name="Pitluck S."/>
            <person name="Chain P."/>
            <person name="Malfatti S."/>
            <person name="Shin M."/>
            <person name="Vergez L."/>
            <person name="Schmutz J."/>
            <person name="Larimer F."/>
            <person name="Land M."/>
            <person name="Hauser L."/>
            <person name="Kyrpides N."/>
            <person name="Kim E."/>
            <person name="LiPuma J.J."/>
            <person name="Gonzalez C.F."/>
            <person name="Konstantinidis K."/>
            <person name="Tiedje J.M."/>
            <person name="Richardson P."/>
        </authorList>
    </citation>
    <scope>NUCLEOTIDE SEQUENCE [LARGE SCALE GENOMIC DNA]</scope>
    <source>
        <strain>HI2424</strain>
    </source>
</reference>
<evidence type="ECO:0000255" key="1">
    <source>
        <dbReference type="HAMAP-Rule" id="MF_00597"/>
    </source>
</evidence>
<gene>
    <name evidence="1" type="primary">adc</name>
    <name type="ordered locus">Bcen2424_5714</name>
</gene>
<organism>
    <name type="scientific">Burkholderia cenocepacia (strain HI2424)</name>
    <dbReference type="NCBI Taxonomy" id="331272"/>
    <lineage>
        <taxon>Bacteria</taxon>
        <taxon>Pseudomonadati</taxon>
        <taxon>Pseudomonadota</taxon>
        <taxon>Betaproteobacteria</taxon>
        <taxon>Burkholderiales</taxon>
        <taxon>Burkholderiaceae</taxon>
        <taxon>Burkholderia</taxon>
        <taxon>Burkholderia cepacia complex</taxon>
    </lineage>
</organism>
<sequence length="246" mass="27454">MKPSDVRSKAFAMPLTSPAFPMGPYRFVDREFLIITYRTDPDRLREIVPEPLQVTEPLVHYEFIRMADSTGFGDYTESGQVIPVEYEGQPGGYTLAMYLDDHPPIAGGRELWGFPKKLASPTLHVNTDHILGTLDYGKVRVATGTMGYKHKELDIDEQTKRLAGPNFLLKIIPHVDGTARVCELVRYYMQDIKMKGAWTGPASLELAPHALAPVADLPVLEIVEARHLVADLTLGLGEVVYDYLAQ</sequence>